<accession>P35885</accession>
<accession>Q9KXX5</accession>
<organism>
    <name type="scientific">Streptomyces coelicolor (strain ATCC BAA-471 / A3(2) / M145)</name>
    <dbReference type="NCBI Taxonomy" id="100226"/>
    <lineage>
        <taxon>Bacteria</taxon>
        <taxon>Bacillati</taxon>
        <taxon>Actinomycetota</taxon>
        <taxon>Actinomycetes</taxon>
        <taxon>Kitasatosporales</taxon>
        <taxon>Streptomycetaceae</taxon>
        <taxon>Streptomyces</taxon>
        <taxon>Streptomyces albidoflavus group</taxon>
    </lineage>
</organism>
<reference key="1">
    <citation type="journal article" date="1994" name="Gene">
        <title>Gene organization in the dnaA-gyrA region of the Streptomyces coelicolor chromosome.</title>
        <authorList>
            <person name="Calcutt M.J."/>
        </authorList>
    </citation>
    <scope>NUCLEOTIDE SEQUENCE [GENOMIC DNA]</scope>
    <source>
        <strain>A3(2) / NRRL B-16638</strain>
    </source>
</reference>
<reference key="2">
    <citation type="journal article" date="2002" name="Nature">
        <title>Complete genome sequence of the model actinomycete Streptomyces coelicolor A3(2).</title>
        <authorList>
            <person name="Bentley S.D."/>
            <person name="Chater K.F."/>
            <person name="Cerdeno-Tarraga A.-M."/>
            <person name="Challis G.L."/>
            <person name="Thomson N.R."/>
            <person name="James K.D."/>
            <person name="Harris D.E."/>
            <person name="Quail M.A."/>
            <person name="Kieser H."/>
            <person name="Harper D."/>
            <person name="Bateman A."/>
            <person name="Brown S."/>
            <person name="Chandra G."/>
            <person name="Chen C.W."/>
            <person name="Collins M."/>
            <person name="Cronin A."/>
            <person name="Fraser A."/>
            <person name="Goble A."/>
            <person name="Hidalgo J."/>
            <person name="Hornsby T."/>
            <person name="Howarth S."/>
            <person name="Huang C.-H."/>
            <person name="Kieser T."/>
            <person name="Larke L."/>
            <person name="Murphy L.D."/>
            <person name="Oliver K."/>
            <person name="O'Neil S."/>
            <person name="Rabbinowitsch E."/>
            <person name="Rajandream M.A."/>
            <person name="Rutherford K.M."/>
            <person name="Rutter S."/>
            <person name="Seeger K."/>
            <person name="Saunders D."/>
            <person name="Sharp S."/>
            <person name="Squares R."/>
            <person name="Squares S."/>
            <person name="Taylor K."/>
            <person name="Warren T."/>
            <person name="Wietzorrek A."/>
            <person name="Woodward J.R."/>
            <person name="Barrell B.G."/>
            <person name="Parkhill J."/>
            <person name="Hopwood D.A."/>
        </authorList>
    </citation>
    <scope>NUCLEOTIDE SEQUENCE [LARGE SCALE GENOMIC DNA]</scope>
    <source>
        <strain>ATCC BAA-471 / A3(2) / M145</strain>
    </source>
</reference>
<evidence type="ECO:0000255" key="1">
    <source>
        <dbReference type="HAMAP-Rule" id="MF_01897"/>
    </source>
</evidence>
<evidence type="ECO:0000255" key="2">
    <source>
        <dbReference type="PROSITE-ProRule" id="PRU01384"/>
    </source>
</evidence>
<evidence type="ECO:0000256" key="3">
    <source>
        <dbReference type="SAM" id="MobiDB-lite"/>
    </source>
</evidence>
<evidence type="ECO:0000305" key="4"/>
<feature type="chain" id="PRO_0000145261" description="DNA gyrase subunit A">
    <location>
        <begin position="1"/>
        <end position="857"/>
    </location>
</feature>
<feature type="domain" description="Topo IIA-type catalytic" evidence="2">
    <location>
        <begin position="39"/>
        <end position="507"/>
    </location>
</feature>
<feature type="region of interest" description="Disordered" evidence="3">
    <location>
        <begin position="825"/>
        <end position="857"/>
    </location>
</feature>
<feature type="short sequence motif" description="GyrA-box" evidence="1">
    <location>
        <begin position="534"/>
        <end position="540"/>
    </location>
</feature>
<feature type="compositionally biased region" description="Acidic residues" evidence="3">
    <location>
        <begin position="828"/>
        <end position="840"/>
    </location>
</feature>
<feature type="active site" description="O-(5'-phospho-DNA)-tyrosine intermediate" evidence="1">
    <location>
        <position position="127"/>
    </location>
</feature>
<feature type="sequence conflict" description="In Ref. 1; AAA65216." evidence="4" ref="1">
    <original>D</original>
    <variation>V</variation>
    <location>
        <position position="41"/>
    </location>
</feature>
<comment type="function">
    <text evidence="1">A type II topoisomerase that negatively supercoils closed circular double-stranded (ds) DNA in an ATP-dependent manner to modulate DNA topology and maintain chromosomes in an underwound state. Negative supercoiling favors strand separation, and DNA replication, transcription, recombination and repair, all of which involve strand separation. Also able to catalyze the interconversion of other topological isomers of dsDNA rings, including catenanes and knotted rings. Type II topoisomerases break and join 2 DNA strands simultaneously in an ATP-dependent manner.</text>
</comment>
<comment type="catalytic activity">
    <reaction evidence="1">
        <text>ATP-dependent breakage, passage and rejoining of double-stranded DNA.</text>
        <dbReference type="EC" id="5.6.2.2"/>
    </reaction>
</comment>
<comment type="subunit">
    <text evidence="1">Heterotetramer, composed of two GyrA and two GyrB chains. In the heterotetramer, GyrA contains the active site tyrosine that forms a transient covalent intermediate with DNA, while GyrB binds cofactors and catalyzes ATP hydrolysis.</text>
</comment>
<comment type="subcellular location">
    <subcellularLocation>
        <location evidence="1">Cytoplasm</location>
    </subcellularLocation>
</comment>
<comment type="miscellaneous">
    <text evidence="1">Few gyrases are as efficient as E.coli at forming negative supercoils. Not all organisms have 2 type II topoisomerases; in organisms with a single type II topoisomerase this enzyme also has to decatenate newly replicated chromosomes.</text>
</comment>
<comment type="similarity">
    <text evidence="1">Belongs to the type II topoisomerase GyrA/ParC subunit family.</text>
</comment>
<comment type="sequence caution" evidence="4">
    <conflict type="erroneous initiation">
        <sequence resource="EMBL-CDS" id="AAA65216"/>
    </conflict>
    <text>Extended N-terminus.</text>
</comment>
<protein>
    <recommendedName>
        <fullName evidence="1">DNA gyrase subunit A</fullName>
        <ecNumber evidence="1">5.6.2.2</ecNumber>
    </recommendedName>
</protein>
<proteinExistence type="inferred from homology"/>
<name>GYRA_STRCO</name>
<keyword id="KW-0067">ATP-binding</keyword>
<keyword id="KW-0963">Cytoplasm</keyword>
<keyword id="KW-0238">DNA-binding</keyword>
<keyword id="KW-0413">Isomerase</keyword>
<keyword id="KW-0547">Nucleotide-binding</keyword>
<keyword id="KW-1185">Reference proteome</keyword>
<keyword id="KW-0799">Topoisomerase</keyword>
<dbReference type="EC" id="5.6.2.2" evidence="1"/>
<dbReference type="EMBL" id="L27063">
    <property type="protein sequence ID" value="AAA65216.1"/>
    <property type="status" value="ALT_INIT"/>
    <property type="molecule type" value="Genomic_DNA"/>
</dbReference>
<dbReference type="EMBL" id="AL939118">
    <property type="protein sequence ID" value="CAB92993.1"/>
    <property type="molecule type" value="Genomic_DNA"/>
</dbReference>
<dbReference type="RefSeq" id="NP_628060.1">
    <property type="nucleotide sequence ID" value="NC_003888.3"/>
</dbReference>
<dbReference type="SMR" id="P35885"/>
<dbReference type="FunCoup" id="P35885">
    <property type="interactions" value="220"/>
</dbReference>
<dbReference type="STRING" id="100226.gene:17761500"/>
<dbReference type="PaxDb" id="100226-SCO3873"/>
<dbReference type="KEGG" id="sco:SCO3873"/>
<dbReference type="PATRIC" id="fig|100226.15.peg.3946"/>
<dbReference type="eggNOG" id="COG0188">
    <property type="taxonomic scope" value="Bacteria"/>
</dbReference>
<dbReference type="HOGENOM" id="CLU_002977_6_1_11"/>
<dbReference type="InParanoid" id="P35885"/>
<dbReference type="OrthoDB" id="9806486at2"/>
<dbReference type="PhylomeDB" id="P35885"/>
<dbReference type="Proteomes" id="UP000001973">
    <property type="component" value="Chromosome"/>
</dbReference>
<dbReference type="GO" id="GO:0005694">
    <property type="term" value="C:chromosome"/>
    <property type="evidence" value="ECO:0007669"/>
    <property type="project" value="InterPro"/>
</dbReference>
<dbReference type="GO" id="GO:0005737">
    <property type="term" value="C:cytoplasm"/>
    <property type="evidence" value="ECO:0000318"/>
    <property type="project" value="GO_Central"/>
</dbReference>
<dbReference type="GO" id="GO:0009330">
    <property type="term" value="C:DNA topoisomerase type II (double strand cut, ATP-hydrolyzing) complex"/>
    <property type="evidence" value="ECO:0000318"/>
    <property type="project" value="GO_Central"/>
</dbReference>
<dbReference type="GO" id="GO:0005524">
    <property type="term" value="F:ATP binding"/>
    <property type="evidence" value="ECO:0000318"/>
    <property type="project" value="GO_Central"/>
</dbReference>
<dbReference type="GO" id="GO:0003677">
    <property type="term" value="F:DNA binding"/>
    <property type="evidence" value="ECO:0000318"/>
    <property type="project" value="GO_Central"/>
</dbReference>
<dbReference type="GO" id="GO:0034335">
    <property type="term" value="F:DNA negative supercoiling activity"/>
    <property type="evidence" value="ECO:0007669"/>
    <property type="project" value="UniProtKB-ARBA"/>
</dbReference>
<dbReference type="GO" id="GO:0006265">
    <property type="term" value="P:DNA topological change"/>
    <property type="evidence" value="ECO:0000318"/>
    <property type="project" value="GO_Central"/>
</dbReference>
<dbReference type="GO" id="GO:0006261">
    <property type="term" value="P:DNA-templated DNA replication"/>
    <property type="evidence" value="ECO:0007669"/>
    <property type="project" value="UniProtKB-UniRule"/>
</dbReference>
<dbReference type="CDD" id="cd00187">
    <property type="entry name" value="TOP4c"/>
    <property type="match status" value="1"/>
</dbReference>
<dbReference type="FunFam" id="1.10.268.10:FF:000001">
    <property type="entry name" value="DNA gyrase subunit A"/>
    <property type="match status" value="1"/>
</dbReference>
<dbReference type="FunFam" id="2.120.10.90:FF:000001">
    <property type="entry name" value="DNA gyrase subunit A"/>
    <property type="match status" value="1"/>
</dbReference>
<dbReference type="FunFam" id="3.90.199.10:FF:000001">
    <property type="entry name" value="DNA gyrase subunit A"/>
    <property type="match status" value="1"/>
</dbReference>
<dbReference type="FunFam" id="3.30.1360.40:FF:000008">
    <property type="entry name" value="DNA topoisomerase (ATP-hydrolyzing)"/>
    <property type="match status" value="1"/>
</dbReference>
<dbReference type="Gene3D" id="3.30.1360.40">
    <property type="match status" value="1"/>
</dbReference>
<dbReference type="Gene3D" id="2.120.10.90">
    <property type="entry name" value="DNA gyrase/topoisomerase IV, subunit A, C-terminal"/>
    <property type="match status" value="1"/>
</dbReference>
<dbReference type="Gene3D" id="3.90.199.10">
    <property type="entry name" value="Topoisomerase II, domain 5"/>
    <property type="match status" value="1"/>
</dbReference>
<dbReference type="Gene3D" id="1.10.268.10">
    <property type="entry name" value="Topoisomerase, domain 3"/>
    <property type="match status" value="1"/>
</dbReference>
<dbReference type="HAMAP" id="MF_01897">
    <property type="entry name" value="GyrA"/>
    <property type="match status" value="1"/>
</dbReference>
<dbReference type="InterPro" id="IPR005743">
    <property type="entry name" value="GyrA"/>
</dbReference>
<dbReference type="InterPro" id="IPR006691">
    <property type="entry name" value="GyrA/parC_rep"/>
</dbReference>
<dbReference type="InterPro" id="IPR035516">
    <property type="entry name" value="Gyrase/topoIV_suA_C"/>
</dbReference>
<dbReference type="InterPro" id="IPR013760">
    <property type="entry name" value="Topo_IIA-like_dom_sf"/>
</dbReference>
<dbReference type="InterPro" id="IPR013758">
    <property type="entry name" value="Topo_IIA_A/C_ab"/>
</dbReference>
<dbReference type="InterPro" id="IPR013757">
    <property type="entry name" value="Topo_IIA_A_a_sf"/>
</dbReference>
<dbReference type="InterPro" id="IPR002205">
    <property type="entry name" value="Topo_IIA_dom_A"/>
</dbReference>
<dbReference type="InterPro" id="IPR050220">
    <property type="entry name" value="Type_II_DNA_Topoisomerases"/>
</dbReference>
<dbReference type="NCBIfam" id="TIGR01063">
    <property type="entry name" value="gyrA"/>
    <property type="match status" value="1"/>
</dbReference>
<dbReference type="NCBIfam" id="NF004043">
    <property type="entry name" value="PRK05560.1"/>
    <property type="match status" value="1"/>
</dbReference>
<dbReference type="NCBIfam" id="NF004044">
    <property type="entry name" value="PRK05561.1"/>
    <property type="match status" value="1"/>
</dbReference>
<dbReference type="PANTHER" id="PTHR43493:SF5">
    <property type="entry name" value="DNA GYRASE SUBUNIT A, CHLOROPLASTIC_MITOCHONDRIAL"/>
    <property type="match status" value="1"/>
</dbReference>
<dbReference type="PANTHER" id="PTHR43493">
    <property type="entry name" value="DNA GYRASE/TOPOISOMERASE SUBUNIT A"/>
    <property type="match status" value="1"/>
</dbReference>
<dbReference type="Pfam" id="PF03989">
    <property type="entry name" value="DNA_gyraseA_C"/>
    <property type="match status" value="6"/>
</dbReference>
<dbReference type="Pfam" id="PF00521">
    <property type="entry name" value="DNA_topoisoIV"/>
    <property type="match status" value="1"/>
</dbReference>
<dbReference type="SMART" id="SM00434">
    <property type="entry name" value="TOP4c"/>
    <property type="match status" value="1"/>
</dbReference>
<dbReference type="SUPFAM" id="SSF101904">
    <property type="entry name" value="GyrA/ParC C-terminal domain-like"/>
    <property type="match status" value="1"/>
</dbReference>
<dbReference type="SUPFAM" id="SSF56719">
    <property type="entry name" value="Type II DNA topoisomerase"/>
    <property type="match status" value="1"/>
</dbReference>
<dbReference type="PROSITE" id="PS52040">
    <property type="entry name" value="TOPO_IIA"/>
    <property type="match status" value="1"/>
</dbReference>
<sequence>MTTPEGDALAMRVEPVGLETEMQRSYLDYAMSVIVSRALPDVRDGLKPVHRRVLYAMYDGGYRPERGFYKCARVVGDVMGNYHPHGDSSIYDALVRLAQPWSMRMPLVDSNGNFGSPGNDPAAAMRYTECKMAPLSMEMVRDIDEETVDFTDNYDGRSQEPTVLPARFPNLLINGSAGIAVGMATNIPPHNLREVAAGAQWYLENYEASHEELLDALIERIKGPDFPTGALVVGRKGIEEAYRTGRGSITMRAVVEVEEIQNRQCLVVTELPYQTNPDNLAQKIADLVKDGKVGGIADVRDETSSRTGQRLVIVLKRDAVAKVVLNNLYKHTDLQSNFGANMLALVDGVPRTLSLDAFIRHWVNHQIEVIVRRTRFRLRKAEERAHILRGLLKALDAIDEVIALIRRSDTVEIARGGLMDLLEIDEIQANAILEMQLRRLAALERQKIVREHDELQAKITEYNEILASPVRQRGIVSEELTALVEKYGDDRKTKLIPYEGDMSIEDLIAEEDIVVTVTRGGYIKRTKTDDYRAQKRGGKGVRGTKLKEDDIVNHFFVSTTHHWLLFFTNKGRVYRAKAYELPDAGRDARGQHVANLLAFQPDETIAQIRAIRDYEAVPYLVLATKAGLVKKTPLKDYDSPRSGGVIAINLREQADGSDDELIGAELVSAEDDLLLISKKAQSIRFTASDDTLRPMGRATSGVKGMSFREGDELLSMNVVRAGTFVFTATDGGYAKRTSVDEYRVQGRGGLGIKAAKIVEDRGSLVGALVVEEHDEILAITLSGGVIRTRVNGVRETGRDTMGVQLINLGKRDAVVGIARNAEAGREAEEVDGDVAVDETAEGAATTGTDEGEAPSAE</sequence>
<gene>
    <name evidence="1" type="primary">gyrA</name>
    <name type="ordered locus">SCO3873</name>
    <name type="ORF">SCH18.10c</name>
</gene>